<feature type="chain" id="PRO_0000212004" description="Arginine kinase">
    <location>
        <begin position="1"/>
        <end position="355"/>
    </location>
</feature>
<feature type="domain" description="Phosphagen kinase N-terminal" evidence="2">
    <location>
        <begin position="8"/>
        <end position="90"/>
    </location>
</feature>
<feature type="domain" description="Phosphagen kinase C-terminal" evidence="3">
    <location>
        <begin position="118"/>
        <end position="355"/>
    </location>
</feature>
<feature type="binding site" evidence="1">
    <location>
        <begin position="63"/>
        <end position="67"/>
    </location>
    <ligand>
        <name>L-arginine</name>
        <dbReference type="ChEBI" id="CHEBI:32682"/>
    </ligand>
</feature>
<feature type="binding site" evidence="3">
    <location>
        <begin position="121"/>
        <end position="125"/>
    </location>
    <ligand>
        <name>ATP</name>
        <dbReference type="ChEBI" id="CHEBI:30616"/>
    </ligand>
</feature>
<feature type="binding site" evidence="3">
    <location>
        <position position="184"/>
    </location>
    <ligand>
        <name>ATP</name>
        <dbReference type="ChEBI" id="CHEBI:30616"/>
    </ligand>
</feature>
<feature type="binding site" evidence="1">
    <location>
        <position position="224"/>
    </location>
    <ligand>
        <name>L-arginine</name>
        <dbReference type="ChEBI" id="CHEBI:32682"/>
    </ligand>
</feature>
<feature type="binding site" evidence="3">
    <location>
        <position position="228"/>
    </location>
    <ligand>
        <name>ATP</name>
        <dbReference type="ChEBI" id="CHEBI:30616"/>
    </ligand>
</feature>
<feature type="binding site" evidence="1">
    <location>
        <position position="270"/>
    </location>
    <ligand>
        <name>L-arginine</name>
        <dbReference type="ChEBI" id="CHEBI:32682"/>
    </ligand>
</feature>
<feature type="binding site" evidence="3">
    <location>
        <begin position="279"/>
        <end position="283"/>
    </location>
    <ligand>
        <name>ATP</name>
        <dbReference type="ChEBI" id="CHEBI:30616"/>
    </ligand>
</feature>
<feature type="binding site" evidence="3">
    <location>
        <begin position="308"/>
        <end position="313"/>
    </location>
    <ligand>
        <name>ATP</name>
        <dbReference type="ChEBI" id="CHEBI:30616"/>
    </ligand>
</feature>
<feature type="binding site" evidence="1">
    <location>
        <position position="313"/>
    </location>
    <ligand>
        <name>L-arginine</name>
        <dbReference type="ChEBI" id="CHEBI:32682"/>
    </ligand>
</feature>
<sequence length="355" mass="39991">VDAAVLEKLQAGFKKLEAATDCKSLLKKYLSKDIFDKLKGQKTSLGATLLDVIQSGVENLDSGVGIYAPDAEAYTLFAPLFDPIIEDYHVGFKQTDKHPNKDFGDVSSFVNVDPEGQYVISTRVRCGRSMEGYPFNPCLTEAQYKEMQQKVSSTLSSLEGELKGTYFPLTGMSKEVQQKLIDDHFLFKEGDRFLQAANACRYWPAGRGIYHNDNKTFLVWVNEEDHLRIISMQMGGDLGQVFRRLTSAVNEIEKRIPFSHHDRLGFLTFCPTNLGTTVRASVHIKLPKLAANRDKLEEVAGKYNLQVRGTRGEHTEAEGGIYDISNKRRMGLTEFQAVKEMQDGILQLIKMEKEM</sequence>
<proteinExistence type="evidence at protein level"/>
<comment type="catalytic activity">
    <reaction>
        <text>L-arginine + ATP = N(omega)-phospho-L-arginine + ADP + H(+)</text>
        <dbReference type="Rhea" id="RHEA:22940"/>
        <dbReference type="ChEBI" id="CHEBI:15378"/>
        <dbReference type="ChEBI" id="CHEBI:30616"/>
        <dbReference type="ChEBI" id="CHEBI:32682"/>
        <dbReference type="ChEBI" id="CHEBI:58477"/>
        <dbReference type="ChEBI" id="CHEBI:456216"/>
        <dbReference type="EC" id="2.7.3.3"/>
    </reaction>
</comment>
<comment type="subunit">
    <text>Monomer.</text>
</comment>
<comment type="similarity">
    <text evidence="2 3">Belongs to the ATP:guanido phosphotransferase family.</text>
</comment>
<evidence type="ECO:0000250" key="1">
    <source>
        <dbReference type="UniProtKB" id="Q004B5"/>
    </source>
</evidence>
<evidence type="ECO:0000255" key="2">
    <source>
        <dbReference type="PROSITE-ProRule" id="PRU00842"/>
    </source>
</evidence>
<evidence type="ECO:0000255" key="3">
    <source>
        <dbReference type="PROSITE-ProRule" id="PRU00843"/>
    </source>
</evidence>
<accession>P51545</accession>
<dbReference type="EC" id="2.7.3.3"/>
<dbReference type="SMR" id="P51545"/>
<dbReference type="OrthoDB" id="430219at2759"/>
<dbReference type="BRENDA" id="2.7.3.3">
    <property type="organism ID" value="4590"/>
</dbReference>
<dbReference type="GO" id="GO:0005615">
    <property type="term" value="C:extracellular space"/>
    <property type="evidence" value="ECO:0007669"/>
    <property type="project" value="TreeGrafter"/>
</dbReference>
<dbReference type="GO" id="GO:0004054">
    <property type="term" value="F:arginine kinase activity"/>
    <property type="evidence" value="ECO:0000250"/>
    <property type="project" value="UniProtKB"/>
</dbReference>
<dbReference type="GO" id="GO:0005524">
    <property type="term" value="F:ATP binding"/>
    <property type="evidence" value="ECO:0007669"/>
    <property type="project" value="UniProtKB-KW"/>
</dbReference>
<dbReference type="GO" id="GO:0004111">
    <property type="term" value="F:creatine kinase activity"/>
    <property type="evidence" value="ECO:0007669"/>
    <property type="project" value="InterPro"/>
</dbReference>
<dbReference type="GO" id="GO:0046314">
    <property type="term" value="P:phosphocreatine biosynthetic process"/>
    <property type="evidence" value="ECO:0007669"/>
    <property type="project" value="InterPro"/>
</dbReference>
<dbReference type="CDD" id="cd07932">
    <property type="entry name" value="arginine_kinase_like"/>
    <property type="match status" value="1"/>
</dbReference>
<dbReference type="FunFam" id="3.30.590.10:FF:000006">
    <property type="entry name" value="Arginine kinase 1"/>
    <property type="match status" value="1"/>
</dbReference>
<dbReference type="FunFam" id="1.10.135.10:FF:000003">
    <property type="entry name" value="Three-domain arginine kinase"/>
    <property type="match status" value="1"/>
</dbReference>
<dbReference type="Gene3D" id="1.10.135.10">
    <property type="entry name" value="ATP:guanido phosphotransferase, N-terminal domain"/>
    <property type="match status" value="1"/>
</dbReference>
<dbReference type="Gene3D" id="3.30.590.10">
    <property type="entry name" value="Glutamine synthetase/guanido kinase, catalytic domain"/>
    <property type="match status" value="1"/>
</dbReference>
<dbReference type="InterPro" id="IPR000749">
    <property type="entry name" value="ATP-guanido_PTrfase"/>
</dbReference>
<dbReference type="InterPro" id="IPR022415">
    <property type="entry name" value="ATP-guanido_PTrfase_AS"/>
</dbReference>
<dbReference type="InterPro" id="IPR022414">
    <property type="entry name" value="ATP-guanido_PTrfase_cat"/>
</dbReference>
<dbReference type="InterPro" id="IPR022413">
    <property type="entry name" value="ATP-guanido_PTrfase_N"/>
</dbReference>
<dbReference type="InterPro" id="IPR036802">
    <property type="entry name" value="ATP-guanido_PTrfase_N_sf"/>
</dbReference>
<dbReference type="InterPro" id="IPR014746">
    <property type="entry name" value="Gln_synth/guanido_kin_cat_dom"/>
</dbReference>
<dbReference type="PANTHER" id="PTHR11547:SF38">
    <property type="entry name" value="ARGININE KINASE 1-RELATED"/>
    <property type="match status" value="1"/>
</dbReference>
<dbReference type="PANTHER" id="PTHR11547">
    <property type="entry name" value="ARGININE OR CREATINE KINASE"/>
    <property type="match status" value="1"/>
</dbReference>
<dbReference type="Pfam" id="PF00217">
    <property type="entry name" value="ATP-gua_Ptrans"/>
    <property type="match status" value="1"/>
</dbReference>
<dbReference type="Pfam" id="PF02807">
    <property type="entry name" value="ATP-gua_PtransN"/>
    <property type="match status" value="1"/>
</dbReference>
<dbReference type="SUPFAM" id="SSF55931">
    <property type="entry name" value="Glutamine synthetase/guanido kinase"/>
    <property type="match status" value="1"/>
</dbReference>
<dbReference type="SUPFAM" id="SSF48034">
    <property type="entry name" value="Guanido kinase N-terminal domain"/>
    <property type="match status" value="1"/>
</dbReference>
<dbReference type="PROSITE" id="PS00112">
    <property type="entry name" value="PHOSPHAGEN_KINASE"/>
    <property type="match status" value="1"/>
</dbReference>
<dbReference type="PROSITE" id="PS51510">
    <property type="entry name" value="PHOSPHAGEN_KINASE_C"/>
    <property type="match status" value="1"/>
</dbReference>
<dbReference type="PROSITE" id="PS51509">
    <property type="entry name" value="PHOSPHAGEN_KINASE_N"/>
    <property type="match status" value="1"/>
</dbReference>
<keyword id="KW-0067">ATP-binding</keyword>
<keyword id="KW-0903">Direct protein sequencing</keyword>
<keyword id="KW-0418">Kinase</keyword>
<keyword id="KW-0547">Nucleotide-binding</keyword>
<keyword id="KW-0808">Transferase</keyword>
<reference key="1">
    <citation type="journal article" date="1994" name="Zool. Sci.">
        <title>Evolution of phosphagen kinase (III). Amino acid sequence of arginine kinase from the shrimp Penaeus japonicus.</title>
        <authorList>
            <person name="Furukohri T."/>
            <person name="Okamoto S."/>
            <person name="Suzuki T."/>
        </authorList>
    </citation>
    <scope>PROTEIN SEQUENCE</scope>
    <source>
        <tissue>Tail muscle</tissue>
    </source>
</reference>
<protein>
    <recommendedName>
        <fullName>Arginine kinase</fullName>
        <shortName>AK</shortName>
        <ecNumber>2.7.3.3</ecNumber>
    </recommendedName>
</protein>
<organism>
    <name type="scientific">Penaeus japonicus</name>
    <name type="common">Kuruma prawn</name>
    <name type="synonym">Marsupenaeus japonicus</name>
    <dbReference type="NCBI Taxonomy" id="27405"/>
    <lineage>
        <taxon>Eukaryota</taxon>
        <taxon>Metazoa</taxon>
        <taxon>Ecdysozoa</taxon>
        <taxon>Arthropoda</taxon>
        <taxon>Crustacea</taxon>
        <taxon>Multicrustacea</taxon>
        <taxon>Malacostraca</taxon>
        <taxon>Eumalacostraca</taxon>
        <taxon>Eucarida</taxon>
        <taxon>Decapoda</taxon>
        <taxon>Dendrobranchiata</taxon>
        <taxon>Penaeoidea</taxon>
        <taxon>Penaeidae</taxon>
        <taxon>Penaeus</taxon>
    </lineage>
</organism>
<name>KARG_PENJP</name>